<proteinExistence type="inferred from homology"/>
<dbReference type="EMBL" id="AE005176">
    <property type="protein sequence ID" value="AAK05935.1"/>
    <property type="molecule type" value="Genomic_DNA"/>
</dbReference>
<dbReference type="PIR" id="E86854">
    <property type="entry name" value="E86854"/>
</dbReference>
<dbReference type="RefSeq" id="NP_267994.1">
    <property type="nucleotide sequence ID" value="NC_002662.1"/>
</dbReference>
<dbReference type="RefSeq" id="WP_010906162.1">
    <property type="nucleotide sequence ID" value="NC_002662.1"/>
</dbReference>
<dbReference type="SMR" id="Q9CEK0"/>
<dbReference type="TCDB" id="3.A.1.5.10">
    <property type="family name" value="the atp-binding cassette (abc) superfamily"/>
</dbReference>
<dbReference type="PaxDb" id="272623-L88446"/>
<dbReference type="EnsemblBacteria" id="AAK05935">
    <property type="protein sequence ID" value="AAK05935"/>
    <property type="gene ID" value="L88446"/>
</dbReference>
<dbReference type="KEGG" id="lla:L88446"/>
<dbReference type="PATRIC" id="fig|272623.7.peg.1968"/>
<dbReference type="eggNOG" id="COG0747">
    <property type="taxonomic scope" value="Bacteria"/>
</dbReference>
<dbReference type="HOGENOM" id="CLU_017028_8_0_9"/>
<dbReference type="OrthoDB" id="9796817at2"/>
<dbReference type="Proteomes" id="UP000002196">
    <property type="component" value="Chromosome"/>
</dbReference>
<dbReference type="GO" id="GO:0043190">
    <property type="term" value="C:ATP-binding cassette (ABC) transporter complex"/>
    <property type="evidence" value="ECO:0007669"/>
    <property type="project" value="InterPro"/>
</dbReference>
<dbReference type="GO" id="GO:0042597">
    <property type="term" value="C:periplasmic space"/>
    <property type="evidence" value="ECO:0007669"/>
    <property type="project" value="UniProtKB-ARBA"/>
</dbReference>
<dbReference type="GO" id="GO:1904680">
    <property type="term" value="F:peptide transmembrane transporter activity"/>
    <property type="evidence" value="ECO:0007669"/>
    <property type="project" value="TreeGrafter"/>
</dbReference>
<dbReference type="GO" id="GO:0015833">
    <property type="term" value="P:peptide transport"/>
    <property type="evidence" value="ECO:0007669"/>
    <property type="project" value="UniProtKB-KW"/>
</dbReference>
<dbReference type="GO" id="GO:0015031">
    <property type="term" value="P:protein transport"/>
    <property type="evidence" value="ECO:0007669"/>
    <property type="project" value="UniProtKB-KW"/>
</dbReference>
<dbReference type="CDD" id="cd08510">
    <property type="entry name" value="PBP2_Lactococcal_OppA_like"/>
    <property type="match status" value="1"/>
</dbReference>
<dbReference type="Gene3D" id="3.10.105.10">
    <property type="entry name" value="Dipeptide-binding Protein, Domain 3"/>
    <property type="match status" value="1"/>
</dbReference>
<dbReference type="Gene3D" id="3.40.190.10">
    <property type="entry name" value="Periplasmic binding protein-like II"/>
    <property type="match status" value="1"/>
</dbReference>
<dbReference type="InterPro" id="IPR030678">
    <property type="entry name" value="Peptide/Ni-bd"/>
</dbReference>
<dbReference type="InterPro" id="IPR039424">
    <property type="entry name" value="SBP_5"/>
</dbReference>
<dbReference type="InterPro" id="IPR023765">
    <property type="entry name" value="SBP_5_CS"/>
</dbReference>
<dbReference type="InterPro" id="IPR000914">
    <property type="entry name" value="SBP_5_dom"/>
</dbReference>
<dbReference type="PANTHER" id="PTHR30290:SF9">
    <property type="entry name" value="OLIGOPEPTIDE-BINDING PROTEIN APPA"/>
    <property type="match status" value="1"/>
</dbReference>
<dbReference type="PANTHER" id="PTHR30290">
    <property type="entry name" value="PERIPLASMIC BINDING COMPONENT OF ABC TRANSPORTER"/>
    <property type="match status" value="1"/>
</dbReference>
<dbReference type="Pfam" id="PF00496">
    <property type="entry name" value="SBP_bac_5"/>
    <property type="match status" value="1"/>
</dbReference>
<dbReference type="PIRSF" id="PIRSF002741">
    <property type="entry name" value="MppA"/>
    <property type="match status" value="1"/>
</dbReference>
<dbReference type="SUPFAM" id="SSF53850">
    <property type="entry name" value="Periplasmic binding protein-like II"/>
    <property type="match status" value="1"/>
</dbReference>
<dbReference type="PROSITE" id="PS51257">
    <property type="entry name" value="PROKAR_LIPOPROTEIN"/>
    <property type="match status" value="1"/>
</dbReference>
<dbReference type="PROSITE" id="PS01040">
    <property type="entry name" value="SBP_BACTERIAL_5"/>
    <property type="match status" value="1"/>
</dbReference>
<evidence type="ECO:0000250" key="1">
    <source>
        <dbReference type="UniProtKB" id="Q07741"/>
    </source>
</evidence>
<evidence type="ECO:0000255" key="2">
    <source>
        <dbReference type="PROSITE-ProRule" id="PRU00303"/>
    </source>
</evidence>
<evidence type="ECO:0000305" key="3"/>
<name>OPPA_LACLA</name>
<protein>
    <recommendedName>
        <fullName evidence="3">Oligopeptide-binding protein OppA</fullName>
    </recommendedName>
</protein>
<reference key="1">
    <citation type="journal article" date="2001" name="Genome Res.">
        <title>The complete genome sequence of the lactic acid bacterium Lactococcus lactis ssp. lactis IL1403.</title>
        <authorList>
            <person name="Bolotin A."/>
            <person name="Wincker P."/>
            <person name="Mauger S."/>
            <person name="Jaillon O."/>
            <person name="Malarme K."/>
            <person name="Weissenbach J."/>
            <person name="Ehrlich S.D."/>
            <person name="Sorokin A."/>
        </authorList>
    </citation>
    <scope>NUCLEOTIDE SEQUENCE [LARGE SCALE GENOMIC DNA]</scope>
    <source>
        <strain>IL1403</strain>
    </source>
</reference>
<organism>
    <name type="scientific">Lactococcus lactis subsp. lactis (strain IL1403)</name>
    <name type="common">Streptococcus lactis</name>
    <dbReference type="NCBI Taxonomy" id="272623"/>
    <lineage>
        <taxon>Bacteria</taxon>
        <taxon>Bacillati</taxon>
        <taxon>Bacillota</taxon>
        <taxon>Bacilli</taxon>
        <taxon>Lactobacillales</taxon>
        <taxon>Streptococcaceae</taxon>
        <taxon>Lactococcus</taxon>
    </lineage>
</organism>
<sequence>MKKLKVTLLASSVVLAAALLSACGSNQNSSTSTKKLKAGNFDVAYQNPDKAIKGGNLKIAYQSDSPMKAEWLAPLSDDATFGSMSSPGGGQDGLFFTNSSFKYINGGPANVSLYKDAKTATITLRKDLKWSDGSEVTAKDYEFSYDLTANPAYGSDRWTDSLANIVGLSDYHAGKAKTISGITFPDGENGKVIKVQFKEMTPGMNQTGNGYFLETVAPYQYLKDVAPKDLASSPKSTTKPLVTGPFKPENVVAGESIKYVPNPYYWGEKPKLNSITYEIVSTAKSVAALSAHKYDYINDMRASQYKQVKDVKGYKVLGQQELYISLMYYNLGHYDVKKSISVQDRKTPLQDQNVREALGYARNVAAVQAKFSNGLATPANGLIPPIFKEFTSPSVKGYEKQDLDKANKLLDEDGWKLNKSTGYREKDGKELSLVYAARVGDANSETIAQNYIQQWKKIGVKVSLYHGKLMEFNSWVDHMTTPPGSDDWDITDGAWSLSGEPSQQDLFSAAAPYNFGHFNDPEITKDLNDIDSTKAEDSTYRKAAFIKYQEDMNKKAYVVPTAYAINYTPVNKRVVGMTLDYGAMNTWSEIGVSSDKMATK</sequence>
<accession>Q9CEK0</accession>
<comment type="function">
    <text evidence="1">Part of the ABC transporter complex OppABCDF involved in the uptake of oligopeptides.</text>
</comment>
<comment type="subunit">
    <text evidence="1">The complex is composed of two ATP-binding proteins (OppD and OppF), two transmembrane proteins (OppB and OppC) and a solute-binding protein (OppA).</text>
</comment>
<comment type="subcellular location">
    <subcellularLocation>
        <location evidence="2">Cell membrane</location>
        <topology evidence="2">Lipid-anchor</topology>
    </subcellularLocation>
</comment>
<comment type="similarity">
    <text evidence="3">Belongs to the bacterial solute-binding protein 5 family.</text>
</comment>
<gene>
    <name type="primary">oppA</name>
    <name type="ordered locus">LL1837</name>
    <name type="ORF">L88446</name>
</gene>
<keyword id="KW-1003">Cell membrane</keyword>
<keyword id="KW-0449">Lipoprotein</keyword>
<keyword id="KW-0472">Membrane</keyword>
<keyword id="KW-0564">Palmitate</keyword>
<keyword id="KW-0571">Peptide transport</keyword>
<keyword id="KW-0653">Protein transport</keyword>
<keyword id="KW-1185">Reference proteome</keyword>
<keyword id="KW-0732">Signal</keyword>
<keyword id="KW-0813">Transport</keyword>
<feature type="signal peptide" evidence="2">
    <location>
        <begin position="1"/>
        <end position="22"/>
    </location>
</feature>
<feature type="chain" id="PRO_0000031794" description="Oligopeptide-binding protein OppA">
    <location>
        <begin position="23"/>
        <end position="600"/>
    </location>
</feature>
<feature type="lipid moiety-binding region" description="N-palmitoyl cysteine" evidence="2">
    <location>
        <position position="23"/>
    </location>
</feature>
<feature type="lipid moiety-binding region" description="S-diacylglycerol cysteine" evidence="2">
    <location>
        <position position="23"/>
    </location>
</feature>